<reference key="1">
    <citation type="journal article" date="2006" name="Nat. Biotechnol.">
        <title>Genome sequence of the ubiquitous hydrocarbon-degrading marine bacterium Alcanivorax borkumensis.</title>
        <authorList>
            <person name="Schneiker S."/>
            <person name="Martins dos Santos V.A.P."/>
            <person name="Bartels D."/>
            <person name="Bekel T."/>
            <person name="Brecht M."/>
            <person name="Buhrmester J."/>
            <person name="Chernikova T.N."/>
            <person name="Denaro R."/>
            <person name="Ferrer M."/>
            <person name="Gertler C."/>
            <person name="Goesmann A."/>
            <person name="Golyshina O.V."/>
            <person name="Kaminski F."/>
            <person name="Khachane A.N."/>
            <person name="Lang S."/>
            <person name="Linke B."/>
            <person name="McHardy A.C."/>
            <person name="Meyer F."/>
            <person name="Nechitaylo T."/>
            <person name="Puehler A."/>
            <person name="Regenhardt D."/>
            <person name="Rupp O."/>
            <person name="Sabirova J.S."/>
            <person name="Selbitschka W."/>
            <person name="Yakimov M.M."/>
            <person name="Timmis K.N."/>
            <person name="Vorhoelter F.-J."/>
            <person name="Weidner S."/>
            <person name="Kaiser O."/>
            <person name="Golyshin P.N."/>
        </authorList>
    </citation>
    <scope>NUCLEOTIDE SEQUENCE [LARGE SCALE GENOMIC DNA]</scope>
    <source>
        <strain>ATCC 700651 / DSM 11573 / NCIMB 13689 / SK2</strain>
    </source>
</reference>
<evidence type="ECO:0000255" key="1">
    <source>
        <dbReference type="HAMAP-Rule" id="MF_00248"/>
    </source>
</evidence>
<protein>
    <recommendedName>
        <fullName evidence="1">ATP-dependent protease subunit HslV</fullName>
        <ecNumber evidence="1">3.4.25.2</ecNumber>
    </recommendedName>
</protein>
<sequence length="180" mass="19325">MEQYRGTTIVSVRRGNNVVIGGDGQVSLGNTVMKGNARKVRRLFHGKVIAGFAGGTADAFTLFERFEAQLEKHQGHLVRAAVELAKDWRTDRALRRLEALLAVADKESSLIITGNGDVIEPEKDGLIAIGSGGPFAQSAATALLDNTDLPARDIVAKALTIAGDICIYTNHNHTFEELDG</sequence>
<comment type="function">
    <text evidence="1">Protease subunit of a proteasome-like degradation complex believed to be a general protein degrading machinery.</text>
</comment>
<comment type="catalytic activity">
    <reaction evidence="1">
        <text>ATP-dependent cleavage of peptide bonds with broad specificity.</text>
        <dbReference type="EC" id="3.4.25.2"/>
    </reaction>
</comment>
<comment type="activity regulation">
    <text evidence="1">Allosterically activated by HslU binding.</text>
</comment>
<comment type="subunit">
    <text evidence="1">A double ring-shaped homohexamer of HslV is capped on each side by a ring-shaped HslU homohexamer. The assembly of the HslU/HslV complex is dependent on binding of ATP.</text>
</comment>
<comment type="subcellular location">
    <subcellularLocation>
        <location evidence="1">Cytoplasm</location>
    </subcellularLocation>
</comment>
<comment type="similarity">
    <text evidence="1">Belongs to the peptidase T1B family. HslV subfamily.</text>
</comment>
<dbReference type="EC" id="3.4.25.2" evidence="1"/>
<dbReference type="EMBL" id="AM286690">
    <property type="protein sequence ID" value="CAL17692.1"/>
    <property type="molecule type" value="Genomic_DNA"/>
</dbReference>
<dbReference type="RefSeq" id="WP_007150844.1">
    <property type="nucleotide sequence ID" value="NC_008260.1"/>
</dbReference>
<dbReference type="SMR" id="Q0VMA6"/>
<dbReference type="STRING" id="393595.ABO_2244"/>
<dbReference type="MEROPS" id="T01.007"/>
<dbReference type="KEGG" id="abo:ABO_2244"/>
<dbReference type="eggNOG" id="COG5405">
    <property type="taxonomic scope" value="Bacteria"/>
</dbReference>
<dbReference type="HOGENOM" id="CLU_093872_1_0_6"/>
<dbReference type="OrthoDB" id="9804884at2"/>
<dbReference type="Proteomes" id="UP000008871">
    <property type="component" value="Chromosome"/>
</dbReference>
<dbReference type="GO" id="GO:0009376">
    <property type="term" value="C:HslUV protease complex"/>
    <property type="evidence" value="ECO:0007669"/>
    <property type="project" value="UniProtKB-UniRule"/>
</dbReference>
<dbReference type="GO" id="GO:0005839">
    <property type="term" value="C:proteasome core complex"/>
    <property type="evidence" value="ECO:0007669"/>
    <property type="project" value="InterPro"/>
</dbReference>
<dbReference type="GO" id="GO:0046872">
    <property type="term" value="F:metal ion binding"/>
    <property type="evidence" value="ECO:0007669"/>
    <property type="project" value="UniProtKB-KW"/>
</dbReference>
<dbReference type="GO" id="GO:0004298">
    <property type="term" value="F:threonine-type endopeptidase activity"/>
    <property type="evidence" value="ECO:0007669"/>
    <property type="project" value="UniProtKB-KW"/>
</dbReference>
<dbReference type="GO" id="GO:0051603">
    <property type="term" value="P:proteolysis involved in protein catabolic process"/>
    <property type="evidence" value="ECO:0007669"/>
    <property type="project" value="InterPro"/>
</dbReference>
<dbReference type="CDD" id="cd01913">
    <property type="entry name" value="protease_HslV"/>
    <property type="match status" value="1"/>
</dbReference>
<dbReference type="FunFam" id="3.60.20.10:FF:000002">
    <property type="entry name" value="ATP-dependent protease subunit HslV"/>
    <property type="match status" value="1"/>
</dbReference>
<dbReference type="Gene3D" id="3.60.20.10">
    <property type="entry name" value="Glutamine Phosphoribosylpyrophosphate, subunit 1, domain 1"/>
    <property type="match status" value="1"/>
</dbReference>
<dbReference type="HAMAP" id="MF_00248">
    <property type="entry name" value="HslV"/>
    <property type="match status" value="1"/>
</dbReference>
<dbReference type="InterPro" id="IPR022281">
    <property type="entry name" value="ATP-dep_Prtase_HsIV_su"/>
</dbReference>
<dbReference type="InterPro" id="IPR029055">
    <property type="entry name" value="Ntn_hydrolases_N"/>
</dbReference>
<dbReference type="InterPro" id="IPR001353">
    <property type="entry name" value="Proteasome_sua/b"/>
</dbReference>
<dbReference type="InterPro" id="IPR023333">
    <property type="entry name" value="Proteasome_suB-type"/>
</dbReference>
<dbReference type="NCBIfam" id="TIGR03692">
    <property type="entry name" value="ATP_dep_HslV"/>
    <property type="match status" value="1"/>
</dbReference>
<dbReference type="NCBIfam" id="NF003964">
    <property type="entry name" value="PRK05456.1"/>
    <property type="match status" value="1"/>
</dbReference>
<dbReference type="PANTHER" id="PTHR32194:SF0">
    <property type="entry name" value="ATP-DEPENDENT PROTEASE SUBUNIT HSLV"/>
    <property type="match status" value="1"/>
</dbReference>
<dbReference type="PANTHER" id="PTHR32194">
    <property type="entry name" value="METALLOPROTEASE TLDD"/>
    <property type="match status" value="1"/>
</dbReference>
<dbReference type="Pfam" id="PF00227">
    <property type="entry name" value="Proteasome"/>
    <property type="match status" value="1"/>
</dbReference>
<dbReference type="PIRSF" id="PIRSF039093">
    <property type="entry name" value="HslV"/>
    <property type="match status" value="1"/>
</dbReference>
<dbReference type="SUPFAM" id="SSF56235">
    <property type="entry name" value="N-terminal nucleophile aminohydrolases (Ntn hydrolases)"/>
    <property type="match status" value="1"/>
</dbReference>
<dbReference type="PROSITE" id="PS51476">
    <property type="entry name" value="PROTEASOME_BETA_2"/>
    <property type="match status" value="1"/>
</dbReference>
<proteinExistence type="inferred from homology"/>
<feature type="chain" id="PRO_1000012572" description="ATP-dependent protease subunit HslV">
    <location>
        <begin position="1"/>
        <end position="180"/>
    </location>
</feature>
<feature type="active site" evidence="1">
    <location>
        <position position="7"/>
    </location>
</feature>
<feature type="binding site" evidence="1">
    <location>
        <position position="163"/>
    </location>
    <ligand>
        <name>Na(+)</name>
        <dbReference type="ChEBI" id="CHEBI:29101"/>
    </ligand>
</feature>
<feature type="binding site" evidence="1">
    <location>
        <position position="166"/>
    </location>
    <ligand>
        <name>Na(+)</name>
        <dbReference type="ChEBI" id="CHEBI:29101"/>
    </ligand>
</feature>
<feature type="binding site" evidence="1">
    <location>
        <position position="169"/>
    </location>
    <ligand>
        <name>Na(+)</name>
        <dbReference type="ChEBI" id="CHEBI:29101"/>
    </ligand>
</feature>
<gene>
    <name evidence="1" type="primary">hslV</name>
    <name type="ordered locus">ABO_2244</name>
</gene>
<accession>Q0VMA6</accession>
<organism>
    <name type="scientific">Alcanivorax borkumensis (strain ATCC 700651 / DSM 11573 / NCIMB 13689 / SK2)</name>
    <dbReference type="NCBI Taxonomy" id="393595"/>
    <lineage>
        <taxon>Bacteria</taxon>
        <taxon>Pseudomonadati</taxon>
        <taxon>Pseudomonadota</taxon>
        <taxon>Gammaproteobacteria</taxon>
        <taxon>Oceanospirillales</taxon>
        <taxon>Alcanivoracaceae</taxon>
        <taxon>Alcanivorax</taxon>
    </lineage>
</organism>
<keyword id="KW-0021">Allosteric enzyme</keyword>
<keyword id="KW-0963">Cytoplasm</keyword>
<keyword id="KW-0378">Hydrolase</keyword>
<keyword id="KW-0479">Metal-binding</keyword>
<keyword id="KW-0645">Protease</keyword>
<keyword id="KW-1185">Reference proteome</keyword>
<keyword id="KW-0915">Sodium</keyword>
<keyword id="KW-0346">Stress response</keyword>
<keyword id="KW-0888">Threonine protease</keyword>
<name>HSLV_ALCBS</name>